<sequence length="201" mass="22844">MAATALLEAGLARVLFYPTLLYTLFRGKVPGRAHRDWYHRIDPTVLLGALPLRSLTRQLVQDENVRGVITMNEEYETRFLCNSSQEWKRLGVEQLRLSTVDMTGIPTLDNLQKGVQFALKYQSLGQCVYVHCKAGRSRSATMVAAYLIQVHKWSPEEAVRAIAKIRSYIHIRPGQLDVLKEFHKQITARATKDGTFVISKT</sequence>
<keyword id="KW-0025">Alternative splicing</keyword>
<keyword id="KW-0378">Hydrolase</keyword>
<keyword id="KW-0444">Lipid biosynthesis</keyword>
<keyword id="KW-0443">Lipid metabolism</keyword>
<keyword id="KW-0472">Membrane</keyword>
<keyword id="KW-0496">Mitochondrion</keyword>
<keyword id="KW-0999">Mitochondrion inner membrane</keyword>
<keyword id="KW-0594">Phospholipid biosynthesis</keyword>
<keyword id="KW-1208">Phospholipid metabolism</keyword>
<keyword id="KW-0904">Protein phosphatase</keyword>
<keyword id="KW-1267">Proteomics identification</keyword>
<keyword id="KW-1185">Reference proteome</keyword>
<keyword id="KW-0809">Transit peptide</keyword>
<dbReference type="EC" id="3.1.3.27" evidence="6"/>
<dbReference type="EC" id="3.1.3.16" evidence="1"/>
<dbReference type="EC" id="3.1.3.48" evidence="5"/>
<dbReference type="EMBL" id="AY333987">
    <property type="protein sequence ID" value="AAP94732.1"/>
    <property type="molecule type" value="mRNA"/>
</dbReference>
<dbReference type="EMBL" id="AC090559">
    <property type="status" value="NOT_ANNOTATED_CDS"/>
    <property type="molecule type" value="Genomic_DNA"/>
</dbReference>
<dbReference type="EMBL" id="AC104942">
    <property type="status" value="NOT_ANNOTATED_CDS"/>
    <property type="molecule type" value="Genomic_DNA"/>
</dbReference>
<dbReference type="EMBL" id="BC014048">
    <property type="protein sequence ID" value="AAH14048.1"/>
    <property type="status" value="ALT_INIT"/>
    <property type="molecule type" value="mRNA"/>
</dbReference>
<dbReference type="EMBL" id="BC020242">
    <property type="protein sequence ID" value="AAH20242.1"/>
    <property type="molecule type" value="mRNA"/>
</dbReference>
<dbReference type="EMBL" id="BC073798">
    <property type="status" value="NOT_ANNOTATED_CDS"/>
    <property type="molecule type" value="mRNA"/>
</dbReference>
<dbReference type="EMBL" id="AF277187">
    <property type="protein sequence ID" value="AAK07545.1"/>
    <property type="status" value="ALT_INIT"/>
    <property type="molecule type" value="mRNA"/>
</dbReference>
<dbReference type="CCDS" id="CCDS41643.1">
    <molecule id="Q8WUK0-1"/>
</dbReference>
<dbReference type="CCDS" id="CCDS44593.1">
    <molecule id="Q8WUK0-3"/>
</dbReference>
<dbReference type="RefSeq" id="NP_001137456.1">
    <molecule id="Q8WUK0-3"/>
    <property type="nucleotide sequence ID" value="NM_001143984.2"/>
</dbReference>
<dbReference type="RefSeq" id="NP_783859.1">
    <molecule id="Q8WUK0-1"/>
    <property type="nucleotide sequence ID" value="NM_175732.3"/>
</dbReference>
<dbReference type="SMR" id="Q8WUK0"/>
<dbReference type="BioGRID" id="125402">
    <property type="interactions" value="203"/>
</dbReference>
<dbReference type="FunCoup" id="Q8WUK0">
    <property type="interactions" value="1991"/>
</dbReference>
<dbReference type="IntAct" id="Q8WUK0">
    <property type="interactions" value="153"/>
</dbReference>
<dbReference type="MINT" id="Q8WUK0"/>
<dbReference type="STRING" id="9606.ENSP00000325958"/>
<dbReference type="BindingDB" id="Q8WUK0"/>
<dbReference type="ChEMBL" id="CHEMBL2052033"/>
<dbReference type="DrugCentral" id="Q8WUK0"/>
<dbReference type="DEPOD" id="PTPMT1"/>
<dbReference type="GlyGen" id="Q8WUK0">
    <property type="glycosylation" value="1 site, 1 O-linked glycan (1 site)"/>
</dbReference>
<dbReference type="iPTMnet" id="Q8WUK0"/>
<dbReference type="PhosphoSitePlus" id="Q8WUK0"/>
<dbReference type="SwissPalm" id="Q8WUK0"/>
<dbReference type="BioMuta" id="PTPMT1"/>
<dbReference type="DMDM" id="73621420"/>
<dbReference type="jPOST" id="Q8WUK0"/>
<dbReference type="MassIVE" id="Q8WUK0"/>
<dbReference type="PaxDb" id="9606-ENSP00000325958"/>
<dbReference type="PeptideAtlas" id="Q8WUK0"/>
<dbReference type="ProteomicsDB" id="19078"/>
<dbReference type="ProteomicsDB" id="74692">
    <molecule id="Q8WUK0-1"/>
</dbReference>
<dbReference type="ProteomicsDB" id="74693">
    <molecule id="Q8WUK0-2"/>
</dbReference>
<dbReference type="Pumba" id="Q8WUK0"/>
<dbReference type="Antibodypedia" id="6453">
    <property type="antibodies" value="162 antibodies from 27 providers"/>
</dbReference>
<dbReference type="DNASU" id="114971"/>
<dbReference type="Ensembl" id="ENST00000326656.12">
    <molecule id="Q8WUK0-2"/>
    <property type="protein sequence ID" value="ENSP00000325882.8"/>
    <property type="gene ID" value="ENSG00000110536.14"/>
</dbReference>
<dbReference type="Ensembl" id="ENST00000326674.10">
    <molecule id="Q8WUK0-1"/>
    <property type="protein sequence ID" value="ENSP00000325958.9"/>
    <property type="gene ID" value="ENSG00000110536.14"/>
</dbReference>
<dbReference type="Ensembl" id="ENST00000426530.2">
    <molecule id="Q8WUK0-3"/>
    <property type="protein sequence ID" value="ENSP00000410272.2"/>
    <property type="gene ID" value="ENSG00000110536.14"/>
</dbReference>
<dbReference type="GeneID" id="114971"/>
<dbReference type="KEGG" id="hsa:114971"/>
<dbReference type="MANE-Select" id="ENST00000326674.10">
    <property type="protein sequence ID" value="ENSP00000325958.9"/>
    <property type="RefSeq nucleotide sequence ID" value="NM_175732.3"/>
    <property type="RefSeq protein sequence ID" value="NP_783859.1"/>
</dbReference>
<dbReference type="UCSC" id="uc001nfs.5">
    <molecule id="Q8WUK0-1"/>
    <property type="organism name" value="human"/>
</dbReference>
<dbReference type="AGR" id="HGNC:26965"/>
<dbReference type="CTD" id="114971"/>
<dbReference type="DisGeNET" id="114971"/>
<dbReference type="GeneCards" id="PTPMT1"/>
<dbReference type="HGNC" id="HGNC:26965">
    <property type="gene designation" value="PTPMT1"/>
</dbReference>
<dbReference type="HPA" id="ENSG00000110536">
    <property type="expression patterns" value="Low tissue specificity"/>
</dbReference>
<dbReference type="MIM" id="609538">
    <property type="type" value="gene"/>
</dbReference>
<dbReference type="neXtProt" id="NX_Q8WUK0"/>
<dbReference type="OpenTargets" id="ENSG00000110536"/>
<dbReference type="PharmGKB" id="PA142671115"/>
<dbReference type="VEuPathDB" id="HostDB:ENSG00000110536"/>
<dbReference type="eggNOG" id="KOG1719">
    <property type="taxonomic scope" value="Eukaryota"/>
</dbReference>
<dbReference type="GeneTree" id="ENSGT00390000014065"/>
<dbReference type="HOGENOM" id="CLU_047330_0_0_1"/>
<dbReference type="InParanoid" id="Q8WUK0"/>
<dbReference type="OMA" id="CCSPEEW"/>
<dbReference type="OrthoDB" id="273181at2759"/>
<dbReference type="PAN-GO" id="Q8WUK0">
    <property type="GO annotations" value="3 GO annotations based on evolutionary models"/>
</dbReference>
<dbReference type="PhylomeDB" id="Q8WUK0"/>
<dbReference type="TreeFam" id="TF319745"/>
<dbReference type="BioCyc" id="MetaCyc:HS03319-MONOMER"/>
<dbReference type="PathwayCommons" id="Q8WUK0"/>
<dbReference type="Reactome" id="R-HSA-1483148">
    <property type="pathway name" value="Synthesis of PG"/>
</dbReference>
<dbReference type="SignaLink" id="Q8WUK0"/>
<dbReference type="SIGNOR" id="Q8WUK0"/>
<dbReference type="UniPathway" id="UPA00084">
    <property type="reaction ID" value="UER00504"/>
</dbReference>
<dbReference type="BioGRID-ORCS" id="114971">
    <property type="hits" value="514 hits in 1199 CRISPR screens"/>
</dbReference>
<dbReference type="ChiTaRS" id="PTPMT1">
    <property type="organism name" value="human"/>
</dbReference>
<dbReference type="GenomeRNAi" id="114971"/>
<dbReference type="Pharos" id="Q8WUK0">
    <property type="development level" value="Tchem"/>
</dbReference>
<dbReference type="PRO" id="PR:Q8WUK0"/>
<dbReference type="Proteomes" id="UP000005640">
    <property type="component" value="Chromosome 11"/>
</dbReference>
<dbReference type="RNAct" id="Q8WUK0">
    <property type="molecule type" value="protein"/>
</dbReference>
<dbReference type="Bgee" id="ENSG00000110536">
    <property type="expression patterns" value="Expressed in left testis and 97 other cell types or tissues"/>
</dbReference>
<dbReference type="ExpressionAtlas" id="Q8WUK0">
    <property type="expression patterns" value="baseline and differential"/>
</dbReference>
<dbReference type="GO" id="GO:0005743">
    <property type="term" value="C:mitochondrial inner membrane"/>
    <property type="evidence" value="ECO:0007669"/>
    <property type="project" value="UniProtKB-SubCell"/>
</dbReference>
<dbReference type="GO" id="GO:0005739">
    <property type="term" value="C:mitochondrion"/>
    <property type="evidence" value="ECO:0000314"/>
    <property type="project" value="HPA"/>
</dbReference>
<dbReference type="GO" id="GO:0005634">
    <property type="term" value="C:nucleus"/>
    <property type="evidence" value="ECO:0007005"/>
    <property type="project" value="UniProtKB"/>
</dbReference>
<dbReference type="GO" id="GO:0008962">
    <property type="term" value="F:phosphatidylglycerophosphatase activity"/>
    <property type="evidence" value="ECO:0000250"/>
    <property type="project" value="UniProtKB"/>
</dbReference>
<dbReference type="GO" id="GO:0004439">
    <property type="term" value="F:phosphatidylinositol-4,5-bisphosphate 5-phosphatase activity"/>
    <property type="evidence" value="ECO:0000318"/>
    <property type="project" value="GO_Central"/>
</dbReference>
<dbReference type="GO" id="GO:0004722">
    <property type="term" value="F:protein serine/threonine phosphatase activity"/>
    <property type="evidence" value="ECO:0007669"/>
    <property type="project" value="UniProtKB-EC"/>
</dbReference>
<dbReference type="GO" id="GO:0004725">
    <property type="term" value="F:protein tyrosine phosphatase activity"/>
    <property type="evidence" value="ECO:0007669"/>
    <property type="project" value="UniProtKB-EC"/>
</dbReference>
<dbReference type="GO" id="GO:0032049">
    <property type="term" value="P:cardiolipin biosynthetic process"/>
    <property type="evidence" value="ECO:0000250"/>
    <property type="project" value="UniProtKB"/>
</dbReference>
<dbReference type="GO" id="GO:2001242">
    <property type="term" value="P:regulation of intrinsic apoptotic signaling pathway"/>
    <property type="evidence" value="ECO:0000316"/>
    <property type="project" value="UniProtKB"/>
</dbReference>
<dbReference type="CDD" id="cd14524">
    <property type="entry name" value="PTPMT1"/>
    <property type="match status" value="1"/>
</dbReference>
<dbReference type="FunFam" id="3.90.190.10:FF:000060">
    <property type="entry name" value="Phosphatidylglycerophosphatase and protein-tyrosine phosphatase 1"/>
    <property type="match status" value="1"/>
</dbReference>
<dbReference type="Gene3D" id="3.90.190.10">
    <property type="entry name" value="Protein tyrosine phosphatase superfamily"/>
    <property type="match status" value="1"/>
</dbReference>
<dbReference type="InterPro" id="IPR000340">
    <property type="entry name" value="Dual-sp_phosphatase_cat-dom"/>
</dbReference>
<dbReference type="InterPro" id="IPR029021">
    <property type="entry name" value="Prot-tyrosine_phosphatase-like"/>
</dbReference>
<dbReference type="InterPro" id="IPR042165">
    <property type="entry name" value="PTPMT1"/>
</dbReference>
<dbReference type="InterPro" id="IPR044596">
    <property type="entry name" value="PTPMT1-like"/>
</dbReference>
<dbReference type="InterPro" id="IPR016130">
    <property type="entry name" value="Tyr_Pase_AS"/>
</dbReference>
<dbReference type="InterPro" id="IPR000387">
    <property type="entry name" value="Tyr_Pase_dom"/>
</dbReference>
<dbReference type="InterPro" id="IPR020422">
    <property type="entry name" value="TYR_PHOSPHATASE_DUAL_dom"/>
</dbReference>
<dbReference type="PANTHER" id="PTHR46712">
    <property type="entry name" value="PHOSPHATIDYLGLYCEROPHOSPHATASE AND PROTEIN-TYROSINE PHOSPHATASE 1"/>
    <property type="match status" value="1"/>
</dbReference>
<dbReference type="PANTHER" id="PTHR46712:SF1">
    <property type="entry name" value="PHOSPHATIDYLGLYCEROPHOSPHATASE AND PROTEIN-TYROSINE PHOSPHATASE 1"/>
    <property type="match status" value="1"/>
</dbReference>
<dbReference type="Pfam" id="PF00782">
    <property type="entry name" value="DSPc"/>
    <property type="match status" value="1"/>
</dbReference>
<dbReference type="SMART" id="SM00195">
    <property type="entry name" value="DSPc"/>
    <property type="match status" value="1"/>
</dbReference>
<dbReference type="SUPFAM" id="SSF52799">
    <property type="entry name" value="(Phosphotyrosine protein) phosphatases II"/>
    <property type="match status" value="1"/>
</dbReference>
<dbReference type="PROSITE" id="PS00383">
    <property type="entry name" value="TYR_PHOSPHATASE_1"/>
    <property type="match status" value="1"/>
</dbReference>
<dbReference type="PROSITE" id="PS50056">
    <property type="entry name" value="TYR_PHOSPHATASE_2"/>
    <property type="match status" value="1"/>
</dbReference>
<dbReference type="PROSITE" id="PS50054">
    <property type="entry name" value="TYR_PHOSPHATASE_DUAL"/>
    <property type="match status" value="1"/>
</dbReference>
<organism>
    <name type="scientific">Homo sapiens</name>
    <name type="common">Human</name>
    <dbReference type="NCBI Taxonomy" id="9606"/>
    <lineage>
        <taxon>Eukaryota</taxon>
        <taxon>Metazoa</taxon>
        <taxon>Chordata</taxon>
        <taxon>Craniata</taxon>
        <taxon>Vertebrata</taxon>
        <taxon>Euteleostomi</taxon>
        <taxon>Mammalia</taxon>
        <taxon>Eutheria</taxon>
        <taxon>Euarchontoglires</taxon>
        <taxon>Primates</taxon>
        <taxon>Haplorrhini</taxon>
        <taxon>Catarrhini</taxon>
        <taxon>Hominidae</taxon>
        <taxon>Homo</taxon>
    </lineage>
</organism>
<comment type="function">
    <text evidence="1 2 6">Lipid phosphatase which dephosphorylates phosphatidylglycerophosphate (PGP) to phosphatidylglycerol (PG) (By similarity). PGP is an essential intermediate in the biosynthetic pathway of cardiolipin, a mitochondrial-specific phospholipid regulating the membrane integrity and activities of the organelle (By similarity). Has also been shown to display phosphatase activity toward phosphoprotein substrates, specifically mediates dephosphorylation of mitochondrial proteins, thereby playing an essential role in ATP production (By similarity). Has probably a preference for proteins phosphorylated on Ser and/or Thr residues compared to proteins phosphorylated on Tyr residues (By similarity). Probably involved in regulation of insulin secretion in pancreatic beta cells (By similarity). May prevent intrinsic apoptosis, probably by regulating mitochondrial membrane integrity (PubMed:24709986).</text>
</comment>
<comment type="catalytic activity">
    <reaction evidence="6">
        <text>a 1,2-diacyl-sn-glycero-3-phospho-(1'-sn-glycero-3'-phosphate) + H2O = a 1,2-diacyl-sn-glycero-3-phospho-(1'-sn-glycerol) + phosphate</text>
        <dbReference type="Rhea" id="RHEA:33751"/>
        <dbReference type="ChEBI" id="CHEBI:15377"/>
        <dbReference type="ChEBI" id="CHEBI:43474"/>
        <dbReference type="ChEBI" id="CHEBI:60110"/>
        <dbReference type="ChEBI" id="CHEBI:64716"/>
        <dbReference type="EC" id="3.1.3.27"/>
    </reaction>
    <physiologicalReaction direction="left-to-right" evidence="10">
        <dbReference type="Rhea" id="RHEA:33752"/>
    </physiologicalReaction>
</comment>
<comment type="catalytic activity">
    <reaction evidence="5">
        <text>O-phospho-L-tyrosyl-[protein] + H2O = L-tyrosyl-[protein] + phosphate</text>
        <dbReference type="Rhea" id="RHEA:10684"/>
        <dbReference type="Rhea" id="RHEA-COMP:10136"/>
        <dbReference type="Rhea" id="RHEA-COMP:20101"/>
        <dbReference type="ChEBI" id="CHEBI:15377"/>
        <dbReference type="ChEBI" id="CHEBI:43474"/>
        <dbReference type="ChEBI" id="CHEBI:46858"/>
        <dbReference type="ChEBI" id="CHEBI:61978"/>
        <dbReference type="EC" id="3.1.3.48"/>
    </reaction>
    <physiologicalReaction direction="left-to-right" evidence="9">
        <dbReference type="Rhea" id="RHEA:10685"/>
    </physiologicalReaction>
</comment>
<comment type="catalytic activity">
    <reaction evidence="1">
        <text>O-phospho-L-seryl-[protein] + H2O = L-seryl-[protein] + phosphate</text>
        <dbReference type="Rhea" id="RHEA:20629"/>
        <dbReference type="Rhea" id="RHEA-COMP:9863"/>
        <dbReference type="Rhea" id="RHEA-COMP:11604"/>
        <dbReference type="ChEBI" id="CHEBI:15377"/>
        <dbReference type="ChEBI" id="CHEBI:29999"/>
        <dbReference type="ChEBI" id="CHEBI:43474"/>
        <dbReference type="ChEBI" id="CHEBI:83421"/>
        <dbReference type="EC" id="3.1.3.16"/>
    </reaction>
    <physiologicalReaction direction="left-to-right" evidence="9">
        <dbReference type="Rhea" id="RHEA:20630"/>
    </physiologicalReaction>
</comment>
<comment type="catalytic activity">
    <reaction evidence="1">
        <text>O-phospho-L-threonyl-[protein] + H2O = L-threonyl-[protein] + phosphate</text>
        <dbReference type="Rhea" id="RHEA:47004"/>
        <dbReference type="Rhea" id="RHEA-COMP:11060"/>
        <dbReference type="Rhea" id="RHEA-COMP:11605"/>
        <dbReference type="ChEBI" id="CHEBI:15377"/>
        <dbReference type="ChEBI" id="CHEBI:30013"/>
        <dbReference type="ChEBI" id="CHEBI:43474"/>
        <dbReference type="ChEBI" id="CHEBI:61977"/>
        <dbReference type="EC" id="3.1.3.16"/>
    </reaction>
    <physiologicalReaction direction="left-to-right" evidence="9">
        <dbReference type="Rhea" id="RHEA:47005"/>
    </physiologicalReaction>
</comment>
<comment type="catalytic activity">
    <reaction evidence="2">
        <text>1,2-di-(9Z-octadecenoyl)-sn-glycero-3-phospho-(1'-sn-glycerol-3'-phosphate) + H2O = 1,2-di-(9Z-octadecenoyl)-sn-glycero-3-phospho-(1'-sn-glycerol) + phosphate</text>
        <dbReference type="Rhea" id="RHEA:42304"/>
        <dbReference type="ChEBI" id="CHEBI:15377"/>
        <dbReference type="ChEBI" id="CHEBI:43474"/>
        <dbReference type="ChEBI" id="CHEBI:75163"/>
        <dbReference type="ChEBI" id="CHEBI:78907"/>
    </reaction>
    <physiologicalReaction direction="left-to-right" evidence="2">
        <dbReference type="Rhea" id="RHEA:42305"/>
    </physiologicalReaction>
</comment>
<comment type="catalytic activity">
    <reaction evidence="2">
        <text>1,2-dioctanoyl-sn-glycero-3-phospho-(1D-myo-inositol-5-phosphate) + H2O = 1,2-dioctanoyl-sn-glycero-3-phospho-(1D-myo-inositol) + phosphate</text>
        <dbReference type="Rhea" id="RHEA:42308"/>
        <dbReference type="ChEBI" id="CHEBI:15377"/>
        <dbReference type="ChEBI" id="CHEBI:43474"/>
        <dbReference type="ChEBI" id="CHEBI:65221"/>
        <dbReference type="ChEBI" id="CHEBI:78911"/>
    </reaction>
    <physiologicalReaction direction="left-to-right" evidence="2">
        <dbReference type="Rhea" id="RHEA:42309"/>
    </physiologicalReaction>
</comment>
<comment type="catalytic activity">
    <reaction evidence="2">
        <text>a 1-acyl-2-hexanoyl-sn-glycero-3-phospho-(1D-myo-inositol-5-phosphate) + H2O = a 1-acyl-2-hexanoyl-sn-glycero-3-phospho-(1D-myo-inositol) + phosphate</text>
        <dbReference type="Rhea" id="RHEA:42320"/>
        <dbReference type="ChEBI" id="CHEBI:15377"/>
        <dbReference type="ChEBI" id="CHEBI:43474"/>
        <dbReference type="ChEBI" id="CHEBI:78930"/>
        <dbReference type="ChEBI" id="CHEBI:78931"/>
    </reaction>
    <physiologicalReaction direction="left-to-right" evidence="2">
        <dbReference type="Rhea" id="RHEA:42321"/>
    </physiologicalReaction>
</comment>
<comment type="catalytic activity">
    <reaction evidence="2">
        <text>1,2-dibutyryl-sn-glycero-3-phospho-(1D-myo-inositol-5-phosphate) + H2O = 1,2-dibutyryl-sn-glycero-3-phospho-(1D-myo-inositol) + phosphate</text>
        <dbReference type="Rhea" id="RHEA:42584"/>
        <dbReference type="ChEBI" id="CHEBI:15377"/>
        <dbReference type="ChEBI" id="CHEBI:43474"/>
        <dbReference type="ChEBI" id="CHEBI:82605"/>
        <dbReference type="ChEBI" id="CHEBI:82606"/>
    </reaction>
    <physiologicalReaction direction="left-to-right" evidence="2">
        <dbReference type="Rhea" id="RHEA:42585"/>
    </physiologicalReaction>
</comment>
<comment type="pathway">
    <text evidence="2">Phospholipid metabolism; phosphatidylglycerol biosynthesis; phosphatidylglycerol from CDP-diacylglycerol: step 2/2.</text>
</comment>
<comment type="subunit">
    <text evidence="6">Interacts with STYXL1; the interaction inhibits PTPMT1 catalytic activity.</text>
</comment>
<comment type="interaction">
    <interactant intactId="EBI-7199479">
        <id>Q8WUK0</id>
    </interactant>
    <interactant intactId="EBI-10173507">
        <id>Q6UY14-3</id>
        <label>ADAMTSL4</label>
    </interactant>
    <organismsDiffer>false</organismsDiffer>
    <experiments>3</experiments>
</comment>
<comment type="interaction">
    <interactant intactId="EBI-7199479">
        <id>Q8WUK0</id>
    </interactant>
    <interactant intactId="EBI-3867333">
        <id>A8MQ03</id>
        <label>CYSRT1</label>
    </interactant>
    <organismsDiffer>false</organismsDiffer>
    <experiments>3</experiments>
</comment>
<comment type="interaction">
    <interactant intactId="EBI-7199479">
        <id>Q8WUK0</id>
    </interactant>
    <interactant intactId="EBI-747754">
        <id>P28799</id>
        <label>GRN</label>
    </interactant>
    <organismsDiffer>false</organismsDiffer>
    <experiments>3</experiments>
</comment>
<comment type="interaction">
    <interactant intactId="EBI-7199479">
        <id>Q8WUK0</id>
    </interactant>
    <interactant intactId="EBI-948001">
        <id>Q15323</id>
        <label>KRT31</label>
    </interactant>
    <organismsDiffer>false</organismsDiffer>
    <experiments>6</experiments>
</comment>
<comment type="interaction">
    <interactant intactId="EBI-7199479">
        <id>Q8WUK0</id>
    </interactant>
    <interactant intactId="EBI-1047093">
        <id>O76011</id>
        <label>KRT34</label>
    </interactant>
    <organismsDiffer>false</organismsDiffer>
    <experiments>3</experiments>
</comment>
<comment type="interaction">
    <interactant intactId="EBI-7199479">
        <id>Q8WUK0</id>
    </interactant>
    <interactant intactId="EBI-10171697">
        <id>Q6A162</id>
        <label>KRT40</label>
    </interactant>
    <organismsDiffer>false</organismsDiffer>
    <experiments>3</experiments>
</comment>
<comment type="interaction">
    <interactant intactId="EBI-7199479">
        <id>Q8WUK0</id>
    </interactant>
    <interactant intactId="EBI-11749135">
        <id>Q8IUG1</id>
        <label>KRTAP1-3</label>
    </interactant>
    <organismsDiffer>false</organismsDiffer>
    <experiments>3</experiments>
</comment>
<comment type="interaction">
    <interactant intactId="EBI-7199479">
        <id>Q8WUK0</id>
    </interactant>
    <interactant intactId="EBI-10172290">
        <id>P60409</id>
        <label>KRTAP10-7</label>
    </interactant>
    <organismsDiffer>false</organismsDiffer>
    <experiments>6</experiments>
</comment>
<comment type="interaction">
    <interactant intactId="EBI-7199479">
        <id>Q8WUK0</id>
    </interactant>
    <interactant intactId="EBI-10171774">
        <id>P60410</id>
        <label>KRTAP10-8</label>
    </interactant>
    <organismsDiffer>false</organismsDiffer>
    <experiments>6</experiments>
</comment>
<comment type="interaction">
    <interactant intactId="EBI-7199479">
        <id>Q8WUK0</id>
    </interactant>
    <interactant intactId="EBI-10172052">
        <id>P60411</id>
        <label>KRTAP10-9</label>
    </interactant>
    <organismsDiffer>false</organismsDiffer>
    <experiments>3</experiments>
</comment>
<comment type="interaction">
    <interactant intactId="EBI-7199479">
        <id>Q8WUK0</id>
    </interactant>
    <interactant intactId="EBI-11953334">
        <id>P60328</id>
        <label>KRTAP12-3</label>
    </interactant>
    <organismsDiffer>false</organismsDiffer>
    <experiments>3</experiments>
</comment>
<comment type="interaction">
    <interactant intactId="EBI-7199479">
        <id>Q8WUK0</id>
    </interactant>
    <interactant intactId="EBI-10196781">
        <id>P0C7H8</id>
        <label>KRTAP2-3</label>
    </interactant>
    <organismsDiffer>false</organismsDiffer>
    <experiments>3</experiments>
</comment>
<comment type="interaction">
    <interactant intactId="EBI-7199479">
        <id>Q8WUK0</id>
    </interactant>
    <interactant intactId="EBI-9996449">
        <id>Q9BYR8</id>
        <label>KRTAP3-1</label>
    </interactant>
    <organismsDiffer>false</organismsDiffer>
    <experiments>3</experiments>
</comment>
<comment type="interaction">
    <interactant intactId="EBI-7199479">
        <id>Q8WUK0</id>
    </interactant>
    <interactant intactId="EBI-739863">
        <id>Q9BQ66</id>
        <label>KRTAP4-12</label>
    </interactant>
    <organismsDiffer>false</organismsDiffer>
    <experiments>3</experiments>
</comment>
<comment type="interaction">
    <interactant intactId="EBI-7199479">
        <id>Q8WUK0</id>
    </interactant>
    <interactant intactId="EBI-11987425">
        <id>Q6L8G8</id>
        <label>KRTAP5-7</label>
    </interactant>
    <organismsDiffer>false</organismsDiffer>
    <experiments>3</experiments>
</comment>
<comment type="interaction">
    <interactant intactId="EBI-7199479">
        <id>Q8WUK0</id>
    </interactant>
    <interactant intactId="EBI-3958099">
        <id>P26371</id>
        <label>KRTAP5-9</label>
    </interactant>
    <organismsDiffer>false</organismsDiffer>
    <experiments>6</experiments>
</comment>
<comment type="interaction">
    <interactant intactId="EBI-7199479">
        <id>Q8WUK0</id>
    </interactant>
    <interactant intactId="EBI-1044640">
        <id>Q9BYQ4</id>
        <label>KRTAP9-2</label>
    </interactant>
    <organismsDiffer>false</organismsDiffer>
    <experiments>6</experiments>
</comment>
<comment type="interaction">
    <interactant intactId="EBI-7199479">
        <id>Q8WUK0</id>
    </interactant>
    <interactant intactId="EBI-1043191">
        <id>Q9BYQ3</id>
        <label>KRTAP9-3</label>
    </interactant>
    <organismsDiffer>false</organismsDiffer>
    <experiments>3</experiments>
</comment>
<comment type="interaction">
    <interactant intactId="EBI-7199479">
        <id>Q8WUK0</id>
    </interactant>
    <interactant intactId="EBI-11973993">
        <id>Q5TA81</id>
        <label>LCE2C</label>
    </interactant>
    <organismsDiffer>false</organismsDiffer>
    <experiments>3</experiments>
</comment>
<comment type="interaction">
    <interactant intactId="EBI-7199479">
        <id>Q8WUK0</id>
    </interactant>
    <interactant intactId="EBI-724076">
        <id>Q99750</id>
        <label>MDFI</label>
    </interactant>
    <organismsDiffer>false</organismsDiffer>
    <experiments>7</experiments>
</comment>
<comment type="interaction">
    <interactant intactId="EBI-7199479">
        <id>Q8WUK0</id>
    </interactant>
    <interactant intactId="EBI-742948">
        <id>Q5JR59</id>
        <label>MTUS2</label>
    </interactant>
    <organismsDiffer>false</organismsDiffer>
    <experiments>3</experiments>
</comment>
<comment type="interaction">
    <interactant intactId="EBI-7199479">
        <id>Q8WUK0</id>
    </interactant>
    <interactant intactId="EBI-945833">
        <id>Q7Z3S9</id>
        <label>NOTCH2NLA</label>
    </interactant>
    <organismsDiffer>false</organismsDiffer>
    <experiments>3</experiments>
</comment>
<comment type="interaction">
    <interactant intactId="EBI-7199479">
        <id>Q8WUK0</id>
    </interactant>
    <interactant intactId="EBI-22310682">
        <id>P0DPK4</id>
        <label>NOTCH2NLC</label>
    </interactant>
    <organismsDiffer>false</organismsDiffer>
    <experiments>3</experiments>
</comment>
<comment type="interaction">
    <interactant intactId="EBI-7199479">
        <id>Q8WUK0</id>
    </interactant>
    <interactant intactId="EBI-10178530">
        <id>O76081-6</id>
        <label>RGS20</label>
    </interactant>
    <organismsDiffer>false</organismsDiffer>
    <experiments>6</experiments>
</comment>
<comment type="interaction">
    <interactant intactId="EBI-7199479">
        <id>Q8WUK0</id>
    </interactant>
    <interactant intactId="EBI-747107">
        <id>Q8IUQ4</id>
        <label>SIAH1</label>
    </interactant>
    <organismsDiffer>false</organismsDiffer>
    <experiments>3</experiments>
</comment>
<comment type="interaction">
    <interactant intactId="EBI-7199479">
        <id>Q8WUK0</id>
    </interactant>
    <interactant intactId="EBI-8638294">
        <id>Q9NUH8</id>
        <label>TMEM14B</label>
    </interactant>
    <organismsDiffer>false</organismsDiffer>
    <experiments>3</experiments>
</comment>
<comment type="interaction">
    <interactant intactId="EBI-7199479">
        <id>Q8WUK0</id>
    </interactant>
    <interactant intactId="EBI-719493">
        <id>P14373</id>
        <label>TRIM27</label>
    </interactant>
    <organismsDiffer>false</organismsDiffer>
    <experiments>3</experiments>
</comment>
<comment type="subcellular location">
    <subcellularLocation>
        <location evidence="1">Mitochondrion inner membrane</location>
        <topology evidence="1">Peripheral membrane protein</topology>
        <orientation evidence="1">Matrix side</orientation>
    </subcellularLocation>
</comment>
<comment type="alternative products">
    <event type="alternative splicing"/>
    <isoform>
        <id>Q8WUK0-1</id>
        <name>1</name>
        <sequence type="displayed"/>
    </isoform>
    <isoform>
        <id>Q8WUK0-2</id>
        <name>2</name>
        <sequence type="described" ref="VSP_015009"/>
    </isoform>
    <isoform>
        <id>Q8WUK0-3</id>
        <name>3</name>
        <sequence type="described" ref="VSP_045030 VSP_045031"/>
    </isoform>
</comment>
<comment type="similarity">
    <text evidence="9">Belongs to the protein-tyrosine phosphatase family. Non-receptor class dual specificity subfamily.</text>
</comment>
<comment type="caution">
    <text evidence="9">Was originally erroneously termed DUSP23.</text>
</comment>
<comment type="sequence caution" evidence="9">
    <conflict type="erroneous initiation">
        <sequence resource="EMBL-CDS" id="AAH14048"/>
    </conflict>
    <text>Extended N-terminus.</text>
</comment>
<comment type="sequence caution" evidence="9">
    <conflict type="erroneous initiation">
        <sequence resource="EMBL-CDS" id="AAK07545"/>
    </conflict>
    <text>Truncated N-terminus.</text>
</comment>
<protein>
    <recommendedName>
        <fullName evidence="9">Phosphatidylglycerophosphatase and protein-tyrosine phosphatase 1</fullName>
        <ecNumber evidence="6">3.1.3.27</ecNumber>
    </recommendedName>
    <alternativeName>
        <fullName>PTEN-like phosphatase</fullName>
    </alternativeName>
    <alternativeName>
        <fullName>Phosphoinositide lipid phosphatase</fullName>
    </alternativeName>
    <alternativeName>
        <fullName>Protein-tyrosine phosphatase mitochondrial 1</fullName>
        <ecNumber evidence="1">3.1.3.16</ecNumber>
        <ecNumber evidence="5">3.1.3.48</ecNumber>
    </alternativeName>
</protein>
<accession>Q8WUK0</accession>
<accession>E9PAT8</accession>
<accession>Q7Z557</accession>
<accession>Q96CR2</accession>
<accession>Q9BXV8</accession>
<proteinExistence type="evidence at protein level"/>
<name>PTPM1_HUMAN</name>
<gene>
    <name evidence="11" type="primary">PTPMT1</name>
    <name type="synonym">MOSP</name>
    <name type="synonym">PLIP</name>
    <name type="ORF">PNAS-129</name>
</gene>
<evidence type="ECO:0000250" key="1">
    <source>
        <dbReference type="UniProtKB" id="P0C089"/>
    </source>
</evidence>
<evidence type="ECO:0000250" key="2">
    <source>
        <dbReference type="UniProtKB" id="Q66GT5"/>
    </source>
</evidence>
<evidence type="ECO:0000255" key="3"/>
<evidence type="ECO:0000255" key="4">
    <source>
        <dbReference type="PROSITE-ProRule" id="PRU00160"/>
    </source>
</evidence>
<evidence type="ECO:0000255" key="5">
    <source>
        <dbReference type="PROSITE-ProRule" id="PRU10044"/>
    </source>
</evidence>
<evidence type="ECO:0000269" key="6">
    <source>
    </source>
</evidence>
<evidence type="ECO:0000303" key="7">
    <source>
    </source>
</evidence>
<evidence type="ECO:0000303" key="8">
    <source ref="4"/>
</evidence>
<evidence type="ECO:0000305" key="9"/>
<evidence type="ECO:0000305" key="10">
    <source>
    </source>
</evidence>
<evidence type="ECO:0000312" key="11">
    <source>
        <dbReference type="HGNC" id="HGNC:26965"/>
    </source>
</evidence>
<feature type="transit peptide" description="Mitochondrion" evidence="3">
    <location>
        <begin position="1"/>
        <end position="27"/>
    </location>
</feature>
<feature type="chain" id="PRO_0000025423" description="Phosphatidylglycerophosphatase and protein-tyrosine phosphatase 1">
    <location>
        <begin position="28"/>
        <end position="201"/>
    </location>
</feature>
<feature type="domain" description="Tyrosine-protein phosphatase" evidence="4">
    <location>
        <begin position="37"/>
        <end position="188"/>
    </location>
</feature>
<feature type="active site" description="Phosphocysteine intermediate" evidence="4">
    <location>
        <position position="132"/>
    </location>
</feature>
<feature type="splice variant" id="VSP_045030" description="In isoform 3." evidence="7">
    <original>LVQDENVRGVITMNEEYETRFLCNSSQEWKRLGVEQLRLSTVDMTGIPTLDNLQKGVQFALKYQSLGQCVYVHCKAGRSRSATMVAAYLIQVH</original>
    <variation>VSRAGEPGPLPRPRRSVPVGPLGSPPSLLSHLFASAAGTGRERARGDHHERGVRDEVPVQLFTGAQMESRGGCKSHRQDPVIHPHQAWPAGCS</variation>
    <location>
        <begin position="59"/>
        <end position="151"/>
    </location>
</feature>
<feature type="splice variant" id="VSP_015009" description="In isoform 2." evidence="7 8">
    <location>
        <begin position="85"/>
        <end position="148"/>
    </location>
</feature>
<feature type="splice variant" id="VSP_045031" description="In isoform 3." evidence="7">
    <location>
        <begin position="152"/>
        <end position="201"/>
    </location>
</feature>
<feature type="mutagenesis site" description="Probable loss of catalytic activity. Does not affect interaction with STYXL1." evidence="6">
    <original>C</original>
    <variation>S</variation>
    <location>
        <position position="132"/>
    </location>
</feature>
<reference key="1">
    <citation type="submission" date="2003-07" db="EMBL/GenBank/DDBJ databases">
        <authorList>
            <person name="Lin L."/>
            <person name="Ke R."/>
            <person name="Li H."/>
            <person name="Zhou G."/>
            <person name="Shen C."/>
            <person name="Yu R."/>
            <person name="Zhong G."/>
            <person name="Xiao W."/>
            <person name="Li M."/>
            <person name="Yang S."/>
        </authorList>
    </citation>
    <scope>NUCLEOTIDE SEQUENCE [LARGE SCALE MRNA] (ISOFORM 1)</scope>
</reference>
<reference key="2">
    <citation type="journal article" date="2006" name="Nature">
        <title>Human chromosome 11 DNA sequence and analysis including novel gene identification.</title>
        <authorList>
            <person name="Taylor T.D."/>
            <person name="Noguchi H."/>
            <person name="Totoki Y."/>
            <person name="Toyoda A."/>
            <person name="Kuroki Y."/>
            <person name="Dewar K."/>
            <person name="Lloyd C."/>
            <person name="Itoh T."/>
            <person name="Takeda T."/>
            <person name="Kim D.-W."/>
            <person name="She X."/>
            <person name="Barlow K.F."/>
            <person name="Bloom T."/>
            <person name="Bruford E."/>
            <person name="Chang J.L."/>
            <person name="Cuomo C.A."/>
            <person name="Eichler E."/>
            <person name="FitzGerald M.G."/>
            <person name="Jaffe D.B."/>
            <person name="LaButti K."/>
            <person name="Nicol R."/>
            <person name="Park H.-S."/>
            <person name="Seaman C."/>
            <person name="Sougnez C."/>
            <person name="Yang X."/>
            <person name="Zimmer A.R."/>
            <person name="Zody M.C."/>
            <person name="Birren B.W."/>
            <person name="Nusbaum C."/>
            <person name="Fujiyama A."/>
            <person name="Hattori M."/>
            <person name="Rogers J."/>
            <person name="Lander E.S."/>
            <person name="Sakaki Y."/>
        </authorList>
    </citation>
    <scope>NUCLEOTIDE SEQUENCE [LARGE SCALE GENOMIC DNA]</scope>
</reference>
<reference key="3">
    <citation type="journal article" date="2004" name="Genome Res.">
        <title>The status, quality, and expansion of the NIH full-length cDNA project: the Mammalian Gene Collection (MGC).</title>
        <authorList>
            <consortium name="The MGC Project Team"/>
        </authorList>
    </citation>
    <scope>NUCLEOTIDE SEQUENCE [LARGE SCALE MRNA] (ISOFORMS 2 AND 3)</scope>
    <source>
        <tissue>Cervix</tissue>
        <tissue>Kidney</tissue>
        <tissue>Kidney adenocarcinoma</tissue>
    </source>
</reference>
<reference key="4">
    <citation type="submission" date="2000-06" db="EMBL/GenBank/DDBJ databases">
        <title>Human acute promyelocytic leukemia cell line NB4's apoptosis/differentiation related genes.</title>
        <authorList>
            <person name="Yu W.-Q."/>
            <person name="Sun B.-Z."/>
            <person name="Chai Y.-B."/>
            <person name="Zhu F."/>
            <person name="Liu X.-S."/>
            <person name="Li Z."/>
            <person name="Lu F."/>
            <person name="Yan W."/>
            <person name="Yang H."/>
            <person name="Zhao Z.-L."/>
        </authorList>
    </citation>
    <scope>NUCLEOTIDE SEQUENCE [LARGE SCALE MRNA] OF 68-201 (ISOFORM 2)</scope>
    <source>
        <tissue>Promyelocytic leukemia</tissue>
    </source>
</reference>
<reference key="5">
    <citation type="journal article" date="2011" name="BMC Syst. Biol.">
        <title>Initial characterization of the human central proteome.</title>
        <authorList>
            <person name="Burkard T.R."/>
            <person name="Planyavsky M."/>
            <person name="Kaupe I."/>
            <person name="Breitwieser F.P."/>
            <person name="Buerckstuemmer T."/>
            <person name="Bennett K.L."/>
            <person name="Superti-Furga G."/>
            <person name="Colinge J."/>
        </authorList>
    </citation>
    <scope>IDENTIFICATION BY MASS SPECTROMETRY [LARGE SCALE ANALYSIS]</scope>
</reference>
<reference key="6">
    <citation type="journal article" date="2012" name="Proc. Natl. Acad. Sci. U.S.A.">
        <title>N-terminal acetylome analyses and functional insights of the N-terminal acetyltransferase NatB.</title>
        <authorList>
            <person name="Van Damme P."/>
            <person name="Lasa M."/>
            <person name="Polevoda B."/>
            <person name="Gazquez C."/>
            <person name="Elosegui-Artola A."/>
            <person name="Kim D.S."/>
            <person name="De Juan-Pardo E."/>
            <person name="Demeyer K."/>
            <person name="Hole K."/>
            <person name="Larrea E."/>
            <person name="Timmerman E."/>
            <person name="Prieto J."/>
            <person name="Arnesen T."/>
            <person name="Sherman F."/>
            <person name="Gevaert K."/>
            <person name="Aldabe R."/>
        </authorList>
    </citation>
    <scope>IDENTIFICATION BY MASS SPECTROMETRY [LARGE SCALE ANALYSIS]</scope>
</reference>
<reference key="7">
    <citation type="journal article" date="2014" name="PLoS ONE">
        <title>The pseudophosphatase MK-STYX physically and genetically interacts with the mitochondrial phosphatase PTPMT1.</title>
        <authorList>
            <person name="Niemi N.M."/>
            <person name="Sacoman J.L."/>
            <person name="Westrate L.M."/>
            <person name="Gaither L.A."/>
            <person name="Lanning N.J."/>
            <person name="Martin K.R."/>
            <person name="MacKeigan J.P."/>
        </authorList>
    </citation>
    <scope>FUNCTION</scope>
    <scope>CATALYTIC ACTIVITY</scope>
    <scope>INTERACTION WITH STYXL1</scope>
    <scope>IDENTIFICATION BY MASS SPECTROMETRY</scope>
    <scope>MUTAGENESIS OF CYS-132</scope>
</reference>
<reference key="8">
    <citation type="journal article" date="2015" name="Proteomics">
        <title>N-terminome analysis of the human mitochondrial proteome.</title>
        <authorList>
            <person name="Vaca Jacome A.S."/>
            <person name="Rabilloud T."/>
            <person name="Schaeffer-Reiss C."/>
            <person name="Rompais M."/>
            <person name="Ayoub D."/>
            <person name="Lane L."/>
            <person name="Bairoch A."/>
            <person name="Van Dorsselaer A."/>
            <person name="Carapito C."/>
        </authorList>
    </citation>
    <scope>IDENTIFICATION BY MASS SPECTROMETRY [LARGE SCALE ANALYSIS]</scope>
</reference>